<feature type="chain" id="PRO_0000346331" description="Methylenetetrahydrofolate--tRNA-(uracil-5-)-methyltransferase TrmFO">
    <location>
        <begin position="1"/>
        <end position="458"/>
    </location>
</feature>
<feature type="binding site" evidence="1">
    <location>
        <begin position="12"/>
        <end position="17"/>
    </location>
    <ligand>
        <name>FAD</name>
        <dbReference type="ChEBI" id="CHEBI:57692"/>
    </ligand>
</feature>
<accession>Q1J148</accession>
<evidence type="ECO:0000255" key="1">
    <source>
        <dbReference type="HAMAP-Rule" id="MF_01037"/>
    </source>
</evidence>
<name>TRMFO_DEIGD</name>
<dbReference type="EC" id="2.1.1.74" evidence="1"/>
<dbReference type="EMBL" id="CP000359">
    <property type="protein sequence ID" value="ABF44786.1"/>
    <property type="molecule type" value="Genomic_DNA"/>
</dbReference>
<dbReference type="RefSeq" id="WP_011529628.1">
    <property type="nucleotide sequence ID" value="NC_008025.1"/>
</dbReference>
<dbReference type="SMR" id="Q1J148"/>
<dbReference type="STRING" id="319795.Dgeo_0484"/>
<dbReference type="KEGG" id="dge:Dgeo_0484"/>
<dbReference type="eggNOG" id="COG1206">
    <property type="taxonomic scope" value="Bacteria"/>
</dbReference>
<dbReference type="HOGENOM" id="CLU_033057_1_0_0"/>
<dbReference type="Proteomes" id="UP000002431">
    <property type="component" value="Chromosome"/>
</dbReference>
<dbReference type="GO" id="GO:0005829">
    <property type="term" value="C:cytosol"/>
    <property type="evidence" value="ECO:0007669"/>
    <property type="project" value="TreeGrafter"/>
</dbReference>
<dbReference type="GO" id="GO:0050660">
    <property type="term" value="F:flavin adenine dinucleotide binding"/>
    <property type="evidence" value="ECO:0007669"/>
    <property type="project" value="UniProtKB-UniRule"/>
</dbReference>
<dbReference type="GO" id="GO:0047151">
    <property type="term" value="F:tRNA (uracil(54)-C5)-methyltransferase activity, 5,10-methylenetetrahydrofolate-dependent"/>
    <property type="evidence" value="ECO:0007669"/>
    <property type="project" value="UniProtKB-UniRule"/>
</dbReference>
<dbReference type="GO" id="GO:0030488">
    <property type="term" value="P:tRNA methylation"/>
    <property type="evidence" value="ECO:0007669"/>
    <property type="project" value="TreeGrafter"/>
</dbReference>
<dbReference type="GO" id="GO:0002098">
    <property type="term" value="P:tRNA wobble uridine modification"/>
    <property type="evidence" value="ECO:0007669"/>
    <property type="project" value="TreeGrafter"/>
</dbReference>
<dbReference type="Gene3D" id="3.50.50.60">
    <property type="entry name" value="FAD/NAD(P)-binding domain"/>
    <property type="match status" value="2"/>
</dbReference>
<dbReference type="HAMAP" id="MF_01037">
    <property type="entry name" value="TrmFO"/>
    <property type="match status" value="1"/>
</dbReference>
<dbReference type="InterPro" id="IPR036188">
    <property type="entry name" value="FAD/NAD-bd_sf"/>
</dbReference>
<dbReference type="InterPro" id="IPR002218">
    <property type="entry name" value="MnmG-rel"/>
</dbReference>
<dbReference type="InterPro" id="IPR020595">
    <property type="entry name" value="MnmG-rel_CS"/>
</dbReference>
<dbReference type="InterPro" id="IPR040131">
    <property type="entry name" value="MnmG_N"/>
</dbReference>
<dbReference type="InterPro" id="IPR004417">
    <property type="entry name" value="TrmFO"/>
</dbReference>
<dbReference type="NCBIfam" id="TIGR00137">
    <property type="entry name" value="gid_trmFO"/>
    <property type="match status" value="1"/>
</dbReference>
<dbReference type="NCBIfam" id="NF003739">
    <property type="entry name" value="PRK05335.1"/>
    <property type="match status" value="1"/>
</dbReference>
<dbReference type="PANTHER" id="PTHR11806">
    <property type="entry name" value="GLUCOSE INHIBITED DIVISION PROTEIN A"/>
    <property type="match status" value="1"/>
</dbReference>
<dbReference type="PANTHER" id="PTHR11806:SF2">
    <property type="entry name" value="METHYLENETETRAHYDROFOLATE--TRNA-(URACIL-5-)-METHYLTRANSFERASE TRMFO"/>
    <property type="match status" value="1"/>
</dbReference>
<dbReference type="Pfam" id="PF01134">
    <property type="entry name" value="GIDA"/>
    <property type="match status" value="1"/>
</dbReference>
<dbReference type="SUPFAM" id="SSF51905">
    <property type="entry name" value="FAD/NAD(P)-binding domain"/>
    <property type="match status" value="1"/>
</dbReference>
<dbReference type="PROSITE" id="PS01281">
    <property type="entry name" value="GIDA_2"/>
    <property type="match status" value="1"/>
</dbReference>
<sequence>MSTEDAAITVIGAGLAGSEAALAAARLGVRVRLHEMRPHKMTPAHRTGNFAELVCSTSLGGEGEMQAKGLLQAELRSVGGAIVGAADSSRVPAGNALAVDRDEFSARVTQAVRAHPLIEVVEGEVEAVPEGIGVIATGPLTSDALAADLARRTGSERLSFYDAAAPVIAFESINMDVAWRAGRYDQSADYINCPFTKEEYLRFFEALEQARRHTPHDWEQLEFFEGCMPIEELARRGVDTPRFGPMSPKGLDDPRTGRWPYAVAQLRQEDRAGRMWSLVGFQTGLKWGDQKVVVNLIPGLENAEIVRYGVMHRNTYLNAPEVLDATLQLRADPQKFVAGVLAGTEGYLESAATGWLAGTNAARLARGLTPLTPPPESMLGGLVRYLASANPKGFQPMNVNWALVPELPVPEGRRKLGKREKRPVLFQRGLNAFVAWAREEAGLPVTPPARPTAALATE</sequence>
<proteinExistence type="inferred from homology"/>
<keyword id="KW-0963">Cytoplasm</keyword>
<keyword id="KW-0274">FAD</keyword>
<keyword id="KW-0285">Flavoprotein</keyword>
<keyword id="KW-0489">Methyltransferase</keyword>
<keyword id="KW-0520">NAD</keyword>
<keyword id="KW-0521">NADP</keyword>
<keyword id="KW-0808">Transferase</keyword>
<keyword id="KW-0819">tRNA processing</keyword>
<protein>
    <recommendedName>
        <fullName evidence="1">Methylenetetrahydrofolate--tRNA-(uracil-5-)-methyltransferase TrmFO</fullName>
        <ecNumber evidence="1">2.1.1.74</ecNumber>
    </recommendedName>
    <alternativeName>
        <fullName evidence="1">Folate-dependent tRNA (uracil-5-)-methyltransferase</fullName>
    </alternativeName>
    <alternativeName>
        <fullName evidence="1">Folate-dependent tRNA(M-5-U54)-methyltransferase</fullName>
    </alternativeName>
</protein>
<comment type="function">
    <text evidence="1">Catalyzes the folate-dependent formation of 5-methyl-uridine at position 54 (M-5-U54) in all tRNAs.</text>
</comment>
<comment type="catalytic activity">
    <reaction evidence="1">
        <text>uridine(54) in tRNA + (6R)-5,10-methylene-5,6,7,8-tetrahydrofolate + NADH + H(+) = 5-methyluridine(54) in tRNA + (6S)-5,6,7,8-tetrahydrofolate + NAD(+)</text>
        <dbReference type="Rhea" id="RHEA:16873"/>
        <dbReference type="Rhea" id="RHEA-COMP:10167"/>
        <dbReference type="Rhea" id="RHEA-COMP:10193"/>
        <dbReference type="ChEBI" id="CHEBI:15378"/>
        <dbReference type="ChEBI" id="CHEBI:15636"/>
        <dbReference type="ChEBI" id="CHEBI:57453"/>
        <dbReference type="ChEBI" id="CHEBI:57540"/>
        <dbReference type="ChEBI" id="CHEBI:57945"/>
        <dbReference type="ChEBI" id="CHEBI:65315"/>
        <dbReference type="ChEBI" id="CHEBI:74447"/>
        <dbReference type="EC" id="2.1.1.74"/>
    </reaction>
</comment>
<comment type="catalytic activity">
    <reaction evidence="1">
        <text>uridine(54) in tRNA + (6R)-5,10-methylene-5,6,7,8-tetrahydrofolate + NADPH + H(+) = 5-methyluridine(54) in tRNA + (6S)-5,6,7,8-tetrahydrofolate + NADP(+)</text>
        <dbReference type="Rhea" id="RHEA:62372"/>
        <dbReference type="Rhea" id="RHEA-COMP:10167"/>
        <dbReference type="Rhea" id="RHEA-COMP:10193"/>
        <dbReference type="ChEBI" id="CHEBI:15378"/>
        <dbReference type="ChEBI" id="CHEBI:15636"/>
        <dbReference type="ChEBI" id="CHEBI:57453"/>
        <dbReference type="ChEBI" id="CHEBI:57783"/>
        <dbReference type="ChEBI" id="CHEBI:58349"/>
        <dbReference type="ChEBI" id="CHEBI:65315"/>
        <dbReference type="ChEBI" id="CHEBI:74447"/>
        <dbReference type="EC" id="2.1.1.74"/>
    </reaction>
</comment>
<comment type="cofactor">
    <cofactor evidence="1">
        <name>FAD</name>
        <dbReference type="ChEBI" id="CHEBI:57692"/>
    </cofactor>
</comment>
<comment type="subcellular location">
    <subcellularLocation>
        <location evidence="1">Cytoplasm</location>
    </subcellularLocation>
</comment>
<comment type="similarity">
    <text evidence="1">Belongs to the MnmG family. TrmFO subfamily.</text>
</comment>
<reference key="1">
    <citation type="submission" date="2006-04" db="EMBL/GenBank/DDBJ databases">
        <title>Complete sequence of chromosome of Deinococcus geothermalis DSM 11300.</title>
        <authorList>
            <person name="Copeland A."/>
            <person name="Lucas S."/>
            <person name="Lapidus A."/>
            <person name="Barry K."/>
            <person name="Detter J.C."/>
            <person name="Glavina del Rio T."/>
            <person name="Hammon N."/>
            <person name="Israni S."/>
            <person name="Dalin E."/>
            <person name="Tice H."/>
            <person name="Pitluck S."/>
            <person name="Brettin T."/>
            <person name="Bruce D."/>
            <person name="Han C."/>
            <person name="Tapia R."/>
            <person name="Saunders E."/>
            <person name="Gilna P."/>
            <person name="Schmutz J."/>
            <person name="Larimer F."/>
            <person name="Land M."/>
            <person name="Hauser L."/>
            <person name="Kyrpides N."/>
            <person name="Kim E."/>
            <person name="Daly M.J."/>
            <person name="Fredrickson J.K."/>
            <person name="Makarova K.S."/>
            <person name="Gaidamakova E.K."/>
            <person name="Zhai M."/>
            <person name="Richardson P."/>
        </authorList>
    </citation>
    <scope>NUCLEOTIDE SEQUENCE [LARGE SCALE GENOMIC DNA]</scope>
    <source>
        <strain>DSM 11300 / CIP 105573 / AG-3a</strain>
    </source>
</reference>
<gene>
    <name evidence="1" type="primary">trmFO</name>
    <name type="ordered locus">Dgeo_0484</name>
</gene>
<organism>
    <name type="scientific">Deinococcus geothermalis (strain DSM 11300 / CIP 105573 / AG-3a)</name>
    <dbReference type="NCBI Taxonomy" id="319795"/>
    <lineage>
        <taxon>Bacteria</taxon>
        <taxon>Thermotogati</taxon>
        <taxon>Deinococcota</taxon>
        <taxon>Deinococci</taxon>
        <taxon>Deinococcales</taxon>
        <taxon>Deinococcaceae</taxon>
        <taxon>Deinococcus</taxon>
    </lineage>
</organism>